<evidence type="ECO:0000255" key="1">
    <source>
        <dbReference type="HAMAP-Rule" id="MF_04067"/>
    </source>
</evidence>
<gene>
    <name evidence="1" type="primary">NS</name>
</gene>
<reference key="1">
    <citation type="submission" date="2005-12" db="EMBL/GenBank/DDBJ databases">
        <title>The NIAID influenza genome sequencing project.</title>
        <authorList>
            <person name="Ghedin E."/>
            <person name="Spiro D."/>
            <person name="Miller N."/>
            <person name="Zaborsky J."/>
            <person name="Feldblyum T."/>
            <person name="Subbu V."/>
            <person name="Shumway M."/>
            <person name="Sparenborg J."/>
            <person name="Groveman L."/>
            <person name="Halpin R."/>
            <person name="Sitz J."/>
            <person name="Koo H."/>
            <person name="Salzberg S.L."/>
            <person name="Webster R.G."/>
            <person name="Hoffmann E."/>
            <person name="Krauss S."/>
            <person name="Naeve C."/>
            <person name="Bao Y."/>
            <person name="Bolotov P."/>
            <person name="Dernovoy D."/>
            <person name="Kiryutin B."/>
            <person name="Lipman D.J."/>
            <person name="Tatusova T."/>
        </authorList>
    </citation>
    <scope>NUCLEOTIDE SEQUENCE [GENOMIC RNA]</scope>
</reference>
<feature type="chain" id="PRO_0000324213" description="Nuclear export protein">
    <location>
        <begin position="1"/>
        <end position="121"/>
    </location>
</feature>
<feature type="short sequence motif" description="Nuclear export signal" evidence="1">
    <location>
        <begin position="12"/>
        <end position="21"/>
    </location>
</feature>
<feature type="short sequence motif" description="Nuclear export signal" evidence="1">
    <location>
        <begin position="85"/>
        <end position="94"/>
    </location>
</feature>
<organismHost>
    <name type="scientific">Aves</name>
    <dbReference type="NCBI Taxonomy" id="8782"/>
</organismHost>
<organismHost>
    <name type="scientific">Cetacea</name>
    <name type="common">whales</name>
    <dbReference type="NCBI Taxonomy" id="9721"/>
</organismHost>
<organismHost>
    <name type="scientific">Homo sapiens</name>
    <name type="common">Human</name>
    <dbReference type="NCBI Taxonomy" id="9606"/>
</organismHost>
<organismHost>
    <name type="scientific">Phocidae</name>
    <name type="common">true seals</name>
    <dbReference type="NCBI Taxonomy" id="9709"/>
</organismHost>
<organismHost>
    <name type="scientific">Sus scrofa</name>
    <name type="common">Pig</name>
    <dbReference type="NCBI Taxonomy" id="9823"/>
</organismHost>
<sequence>MDSNTVSSFQDILLRMSKMQLGSSSEDLNGMITQFESLKLYRDSLGEAVMRMGDLHLLQNRNGKWREQLGQKFEEIRWLIEEVRHRLKTTENSFEQITFMQALQLLFEVEQEIRTFSFQLI</sequence>
<proteinExistence type="inferred from homology"/>
<comment type="function">
    <text evidence="1">Mediates the nuclear export of encapsidated genomic RNAs (ribonucleoproteins, RNPs). Acts as an adapter between viral RNPs complexes and the nuclear export machinery of the cell. Possesses no intrinsic RNA-binding activity, but includes a C-terminal M1-binding domain. This domain is believed to allow recognition of RNPs bound to the protein M1. Since protein M1 is not available in large quantities before late stages of infection, such an indirect recognition mechanism probably ensures that genomic RNPs are not exported from the host nucleus until sufficient quantities of viral mRNA and progeny genomic RNA have been synthesized. Furthermore, the RNPs enter the host cytoplasm only when associated with the M1 protein that is necessary to guide them to the plasma membrane. May down-regulate viral RNA synthesis when overproduced.</text>
</comment>
<comment type="subunit">
    <text evidence="1">Interacts with protein M1. May interact with host nucleoporin RAB/HRB and exportin XPO1/CRM1.</text>
</comment>
<comment type="subcellular location">
    <subcellularLocation>
        <location evidence="1">Virion</location>
    </subcellularLocation>
    <subcellularLocation>
        <location evidence="1">Host nucleus</location>
    </subcellularLocation>
</comment>
<comment type="alternative products">
    <event type="alternative splicing"/>
    <isoform>
        <id>Q2RFA1-1</id>
        <name>NEP</name>
        <name>NS2</name>
        <sequence type="displayed"/>
    </isoform>
    <isoform>
        <id>Q2RFA0-1</id>
        <name>NS1</name>
        <sequence type="external"/>
    </isoform>
</comment>
<comment type="similarity">
    <text evidence="1">Belongs to the influenza viruses NEP family.</text>
</comment>
<dbReference type="EMBL" id="CY006839">
    <property type="protein sequence ID" value="ABC02272.1"/>
    <property type="molecule type" value="Genomic_RNA"/>
</dbReference>
<dbReference type="SMR" id="Q2RFA1"/>
<dbReference type="Proteomes" id="UP000007792">
    <property type="component" value="Genome"/>
</dbReference>
<dbReference type="GO" id="GO:0042025">
    <property type="term" value="C:host cell nucleus"/>
    <property type="evidence" value="ECO:0007669"/>
    <property type="project" value="UniProtKB-SubCell"/>
</dbReference>
<dbReference type="GO" id="GO:0044423">
    <property type="term" value="C:virion component"/>
    <property type="evidence" value="ECO:0007669"/>
    <property type="project" value="UniProtKB-UniRule"/>
</dbReference>
<dbReference type="GO" id="GO:0039675">
    <property type="term" value="P:exit of virus from host cell nucleus through nuclear pore"/>
    <property type="evidence" value="ECO:0007669"/>
    <property type="project" value="UniProtKB-UniRule"/>
</dbReference>
<dbReference type="Gene3D" id="1.10.287.230">
    <property type="match status" value="1"/>
</dbReference>
<dbReference type="Gene3D" id="1.10.287.10">
    <property type="entry name" value="S15/NS1, RNA-binding"/>
    <property type="match status" value="1"/>
</dbReference>
<dbReference type="HAMAP" id="MF_04067">
    <property type="entry name" value="INFV_NEP"/>
    <property type="match status" value="1"/>
</dbReference>
<dbReference type="InterPro" id="IPR000968">
    <property type="entry name" value="Flu_NS2"/>
</dbReference>
<dbReference type="Pfam" id="PF00601">
    <property type="entry name" value="Flu_NS2"/>
    <property type="match status" value="1"/>
</dbReference>
<dbReference type="SUPFAM" id="SSF101156">
    <property type="entry name" value="Nonstructural protein ns2, Nep, M1-binding domain"/>
    <property type="match status" value="1"/>
</dbReference>
<organism>
    <name type="scientific">Influenza A virus (strain A/Memphis/110/1976 H3N2)</name>
    <dbReference type="NCBI Taxonomy" id="383581"/>
    <lineage>
        <taxon>Viruses</taxon>
        <taxon>Riboviria</taxon>
        <taxon>Orthornavirae</taxon>
        <taxon>Negarnaviricota</taxon>
        <taxon>Polyploviricotina</taxon>
        <taxon>Insthoviricetes</taxon>
        <taxon>Articulavirales</taxon>
        <taxon>Orthomyxoviridae</taxon>
        <taxon>Alphainfluenzavirus</taxon>
        <taxon>Alphainfluenzavirus influenzae</taxon>
        <taxon>Influenza A virus</taxon>
    </lineage>
</organism>
<name>NEP_I76A6</name>
<keyword id="KW-0025">Alternative splicing</keyword>
<keyword id="KW-1048">Host nucleus</keyword>
<keyword id="KW-0945">Host-virus interaction</keyword>
<keyword id="KW-0813">Transport</keyword>
<keyword id="KW-0946">Virion</keyword>
<accession>Q2RFA1</accession>
<protein>
    <recommendedName>
        <fullName evidence="1">Nuclear export protein</fullName>
        <shortName evidence="1">NEP</shortName>
    </recommendedName>
    <alternativeName>
        <fullName evidence="1">Non-structural protein 2</fullName>
        <shortName evidence="1">NS2</shortName>
    </alternativeName>
</protein>